<sequence length="406" mass="41994">MIAVNSRNSLNADMTSLHPETLMVHGGMKGLTEAGVHVPAIDLSTTNPVNDVATGGDSYEWLATGHTLKDGDSAVYQRLWQPGVARFETALAGLEHAEEAVAFATGMAAMTAALLAAVSAGTPHIVAVRPLYGGSDHLLETGLLGTTVTWAKEADIASAIQDDTGLVIVETPANPSLDLVDLDSVVSAAGNVPVLVDNTFCTPVLQQPISHGAALVLHSATKYLGGHGDAMGGIIATNADWAMRLRQVRAITGALLHPMGAYLLHRGLRTLAVRMRAAQTTAGELAERLDAHPAISVVHYPGLKGQDPRGLLGRQMSGGGAMIAMELAGGFDAARSFVEHCNLVVHAVSLGGADTLIQHPASLTHRPVAATAKPGDGLIRLSVGLEHVDDLADDLIAALDASRAAA</sequence>
<organism>
    <name type="scientific">Brevibacterium aurantiacum</name>
    <dbReference type="NCBI Taxonomy" id="273384"/>
    <lineage>
        <taxon>Bacteria</taxon>
        <taxon>Bacillati</taxon>
        <taxon>Actinomycetota</taxon>
        <taxon>Actinomycetes</taxon>
        <taxon>Micrococcales</taxon>
        <taxon>Brevibacteriaceae</taxon>
        <taxon>Brevibacterium</taxon>
    </lineage>
</organism>
<comment type="function">
    <text evidence="2 3 8">Catalyzes the alpha,gamma-elimination of L-methionine to produce methanethiol, 2-oxobutanoate and ammonia (PubMed:30940696, PubMed:9726878). May be responsible for the production of methanethiol associated with desirable Cheddar-type sulfur notes during cheese ripening (Probable). Is also able to catalyze the alpha,gamma-elimination of L-homocysteine and DL-selenomethionine, but has no activity toward L-cysteine, L-cystathionine, S-adenosyl-L-homocysteine and D-methionine (PubMed:30940696, PubMed:9726878).</text>
</comment>
<comment type="catalytic activity">
    <reaction evidence="2 3">
        <text>L-methionine + H2O = methanethiol + 2-oxobutanoate + NH4(+)</text>
        <dbReference type="Rhea" id="RHEA:23800"/>
        <dbReference type="ChEBI" id="CHEBI:15377"/>
        <dbReference type="ChEBI" id="CHEBI:16007"/>
        <dbReference type="ChEBI" id="CHEBI:16763"/>
        <dbReference type="ChEBI" id="CHEBI:28938"/>
        <dbReference type="ChEBI" id="CHEBI:57844"/>
        <dbReference type="EC" id="4.4.1.11"/>
    </reaction>
    <physiologicalReaction direction="left-to-right" evidence="2">
        <dbReference type="Rhea" id="RHEA:23801"/>
    </physiologicalReaction>
</comment>
<comment type="catalytic activity">
    <reaction evidence="2 3">
        <text>L-homocysteine + H2O = 2-oxobutanoate + hydrogen sulfide + NH4(+) + H(+)</text>
        <dbReference type="Rhea" id="RHEA:14501"/>
        <dbReference type="ChEBI" id="CHEBI:15377"/>
        <dbReference type="ChEBI" id="CHEBI:15378"/>
        <dbReference type="ChEBI" id="CHEBI:16763"/>
        <dbReference type="ChEBI" id="CHEBI:28938"/>
        <dbReference type="ChEBI" id="CHEBI:29919"/>
        <dbReference type="ChEBI" id="CHEBI:58199"/>
        <dbReference type="EC" id="4.4.1.2"/>
    </reaction>
    <physiologicalReaction direction="left-to-right" evidence="7">
        <dbReference type="Rhea" id="RHEA:14502"/>
    </physiologicalReaction>
</comment>
<comment type="cofactor">
    <cofactor evidence="2 3">
        <name>pyridoxal 5'-phosphate</name>
        <dbReference type="ChEBI" id="CHEBI:597326"/>
    </cofactor>
</comment>
<comment type="activity regulation">
    <text evidence="3">Is inhibited in vitro by carbonyl reagents, completely inactivated by DL-propargylglycine, and unaffected by metal-chelating agents.</text>
</comment>
<comment type="biophysicochemical properties">
    <kinetics>
        <KM evidence="3">6.12 mM for L-methionine</KM>
        <KM evidence="2">6.83 mM for L-methionine</KM>
        <KM evidence="2">0.94 mM for L-homocysteine</KM>
        <Vmax evidence="3">7.0 umol/min/mg enzyme with L-methionine as substrate</Vmax>
        <text evidence="2">kcat is 15.51 sec(-1) with L-methionine as substrate. kcat is 72.44 sec(-1) with L-homocysteine as substrate.</text>
    </kinetics>
    <phDependence>
        <text evidence="3">Optimum pH is 7.5. Is stable at pHs ranging from 6.0 to 8.0 for 24 hours.</text>
    </phDependence>
    <temperatureDependence>
        <text evidence="3">Optimum temperature is 25 degrees Celsius. Is active between 5 and 50 degrees Celsius.</text>
    </temperatureDependence>
</comment>
<comment type="subunit">
    <text evidence="2 3">Homotetramer.</text>
</comment>
<comment type="biotechnology">
    <text evidence="2">The recombinant MGL protein cloned from B.aurantiacum eliminates L-methionine in cell culture, and exerts strong cytotoxicity in human cancer cell lines in vitro. The cytotoxic effect of this protein seems to be attributable, in part, to changes in methylation-sensitive epigenetic abnormalities involved in oncogenesis, including DNA methylation.</text>
</comment>
<comment type="similarity">
    <text evidence="6">Belongs to the trans-sulfuration enzymes family. L-methionine gamma-lyase subfamily.</text>
</comment>
<comment type="caution">
    <text evidence="6">It is uncertain whether Met-1 or Met-14 is the initiator.</text>
</comment>
<gene>
    <name evidence="10" type="ORF">BAUR9175_03070</name>
    <name evidence="12" type="ORF">BAUR920_03040</name>
    <name evidence="11" type="ORF">BAURA63_02933</name>
    <name evidence="9" type="ORF">BAURA86_00394</name>
</gene>
<reference evidence="9 10 11 12" key="1">
    <citation type="submission" date="2017-03" db="EMBL/GenBank/DDBJ databases">
        <authorList>
            <person name="Monnet C."/>
        </authorList>
    </citation>
    <scope>NUCLEOTIDE SEQUENCE [LARGE SCALE GENOMIC DNA]</scope>
    <source>
        <strain>6(3)</strain>
        <strain>8(6)</strain>
        <strain>ATCC 9175 / DSM 20426 / JCM 2590 / NBRC 12171 / NCDO 739 / NCIMB 8546 / KC</strain>
        <strain>CNRZ 920</strain>
    </source>
</reference>
<reference key="2">
    <citation type="journal article" date="1998" name="Appl. Environ. Microbiol.">
        <title>Purification and characterization of L-methionine gamma-lyase from brevibacterium linens BL2.</title>
        <authorList>
            <person name="Dias B."/>
            <person name="Weimer B."/>
        </authorList>
    </citation>
    <scope>FUNCTION</scope>
    <scope>CATALYTIC ACTIVITY</scope>
    <scope>COFACTOR</scope>
    <scope>SUBSTRATE SPECIFICITY</scope>
    <scope>BIOPHYSICOCHEMICAL PROPERTIES</scope>
    <scope>ACTIVITY REGULATION</scope>
    <scope>SUBUNIT</scope>
    <source>
        <strain>BL2</strain>
    </source>
</reference>
<reference key="3">
    <citation type="journal article" date="2019" name="J. Pharmacol. Exp. Ther.">
        <title>Effects in Cancer Cells of the Recombinant L-Methionine Gamma-Lyase from Brevibacterium aurantiacum. Encapsulation in Human Erythrocytes for Sustained L-Methionine Elimination.</title>
        <authorList>
            <person name="Machover D."/>
            <person name="Rossi L."/>
            <person name="Hamelin J."/>
            <person name="Desterke C."/>
            <person name="Goldschmidt E."/>
            <person name="Chadefaux-Vekemans B."/>
            <person name="Bonnarme P."/>
            <person name="Briozzo P."/>
            <person name="Kopecny D."/>
            <person name="Pierige F."/>
            <person name="Magnani M."/>
            <person name="Mollicone R."/>
            <person name="Haghighi-Rad F."/>
            <person name="Gaston-Mathe Y."/>
            <person name="Dairou J."/>
            <person name="Boucheix C."/>
            <person name="Saffroy R."/>
        </authorList>
    </citation>
    <scope>FUNCTION</scope>
    <scope>CATALYTIC ACTIVITY</scope>
    <scope>COFACTOR</scope>
    <scope>SUBSTRATE SPECIFICITY</scope>
    <scope>BIOPHYSICOCHEMICAL PROPERTIES</scope>
    <scope>SUBUNIT</scope>
    <scope>BIOTECHNOLOGY</scope>
    <source>
        <strain>ATCC 9175 / DSM 20426 / JCM 2590 / NBRC 12171 / NCDO 739 / NCIMB 8546 / KC</strain>
    </source>
</reference>
<proteinExistence type="evidence at protein level"/>
<name>MEGL_BREAU</name>
<dbReference type="EC" id="4.4.1.11" evidence="2 3"/>
<dbReference type="EC" id="4.4.1.2" evidence="2"/>
<dbReference type="EMBL" id="FXZI01000001">
    <property type="protein sequence ID" value="SMX72154.1"/>
    <property type="molecule type" value="Genomic_DNA"/>
</dbReference>
<dbReference type="EMBL" id="FXZB01000023">
    <property type="protein sequence ID" value="SMX94104.1"/>
    <property type="molecule type" value="Genomic_DNA"/>
</dbReference>
<dbReference type="EMBL" id="FXYZ01000014">
    <property type="protein sequence ID" value="SMX94451.1"/>
    <property type="molecule type" value="Genomic_DNA"/>
</dbReference>
<dbReference type="EMBL" id="FXZG01000022">
    <property type="protein sequence ID" value="SMX97377.1"/>
    <property type="molecule type" value="Genomic_DNA"/>
</dbReference>
<dbReference type="Proteomes" id="UP000234289">
    <property type="component" value="Unassembled WGS sequence"/>
</dbReference>
<dbReference type="Proteomes" id="UP000234300">
    <property type="component" value="Unassembled WGS sequence"/>
</dbReference>
<dbReference type="Proteomes" id="UP000234327">
    <property type="component" value="Unassembled WGS sequence"/>
</dbReference>
<dbReference type="Proteomes" id="UP000234525">
    <property type="component" value="Unassembled WGS sequence"/>
</dbReference>
<dbReference type="GO" id="GO:0005737">
    <property type="term" value="C:cytoplasm"/>
    <property type="evidence" value="ECO:0007669"/>
    <property type="project" value="TreeGrafter"/>
</dbReference>
<dbReference type="GO" id="GO:0004123">
    <property type="term" value="F:cystathionine gamma-lyase activity"/>
    <property type="evidence" value="ECO:0007669"/>
    <property type="project" value="TreeGrafter"/>
</dbReference>
<dbReference type="GO" id="GO:0018826">
    <property type="term" value="F:methionine gamma-lyase activity"/>
    <property type="evidence" value="ECO:0007669"/>
    <property type="project" value="UniProtKB-EC"/>
</dbReference>
<dbReference type="GO" id="GO:0030170">
    <property type="term" value="F:pyridoxal phosphate binding"/>
    <property type="evidence" value="ECO:0007669"/>
    <property type="project" value="InterPro"/>
</dbReference>
<dbReference type="GO" id="GO:0019343">
    <property type="term" value="P:cysteine biosynthetic process via cystathionine"/>
    <property type="evidence" value="ECO:0007669"/>
    <property type="project" value="TreeGrafter"/>
</dbReference>
<dbReference type="GO" id="GO:0019346">
    <property type="term" value="P:transsulfuration"/>
    <property type="evidence" value="ECO:0007669"/>
    <property type="project" value="InterPro"/>
</dbReference>
<dbReference type="FunFam" id="3.40.640.10:FF:000046">
    <property type="entry name" value="Cystathionine gamma-lyase"/>
    <property type="match status" value="1"/>
</dbReference>
<dbReference type="Gene3D" id="3.90.1150.10">
    <property type="entry name" value="Aspartate Aminotransferase, domain 1"/>
    <property type="match status" value="1"/>
</dbReference>
<dbReference type="Gene3D" id="3.40.640.10">
    <property type="entry name" value="Type I PLP-dependent aspartate aminotransferase-like (Major domain)"/>
    <property type="match status" value="1"/>
</dbReference>
<dbReference type="InterPro" id="IPR000277">
    <property type="entry name" value="Cys/Met-Metab_PyrdxlP-dep_enz"/>
</dbReference>
<dbReference type="InterPro" id="IPR015424">
    <property type="entry name" value="PyrdxlP-dep_Trfase"/>
</dbReference>
<dbReference type="InterPro" id="IPR015421">
    <property type="entry name" value="PyrdxlP-dep_Trfase_major"/>
</dbReference>
<dbReference type="InterPro" id="IPR015422">
    <property type="entry name" value="PyrdxlP-dep_Trfase_small"/>
</dbReference>
<dbReference type="PANTHER" id="PTHR11808:SF85">
    <property type="entry name" value="CYSTATHIONINE GAMMA-LYASE-RELATED"/>
    <property type="match status" value="1"/>
</dbReference>
<dbReference type="PANTHER" id="PTHR11808">
    <property type="entry name" value="TRANS-SULFURATION ENZYME FAMILY MEMBER"/>
    <property type="match status" value="1"/>
</dbReference>
<dbReference type="Pfam" id="PF01053">
    <property type="entry name" value="Cys_Met_Meta_PP"/>
    <property type="match status" value="1"/>
</dbReference>
<dbReference type="PIRSF" id="PIRSF001434">
    <property type="entry name" value="CGS"/>
    <property type="match status" value="1"/>
</dbReference>
<dbReference type="SUPFAM" id="SSF53383">
    <property type="entry name" value="PLP-dependent transferases"/>
    <property type="match status" value="1"/>
</dbReference>
<accession>A0A2H1K3G9</accession>
<evidence type="ECO:0000250" key="1">
    <source>
        <dbReference type="UniProtKB" id="P13254"/>
    </source>
</evidence>
<evidence type="ECO:0000269" key="2">
    <source>
    </source>
</evidence>
<evidence type="ECO:0000269" key="3">
    <source>
    </source>
</evidence>
<evidence type="ECO:0000303" key="4">
    <source>
    </source>
</evidence>
<evidence type="ECO:0000303" key="5">
    <source>
    </source>
</evidence>
<evidence type="ECO:0000305" key="6"/>
<evidence type="ECO:0000305" key="7">
    <source>
    </source>
</evidence>
<evidence type="ECO:0000305" key="8">
    <source>
    </source>
</evidence>
<evidence type="ECO:0000312" key="9">
    <source>
        <dbReference type="EMBL" id="SMX72154.1"/>
    </source>
</evidence>
<evidence type="ECO:0000312" key="10">
    <source>
        <dbReference type="EMBL" id="SMX94104.1"/>
    </source>
</evidence>
<evidence type="ECO:0000312" key="11">
    <source>
        <dbReference type="EMBL" id="SMX94451.1"/>
    </source>
</evidence>
<evidence type="ECO:0000312" key="12">
    <source>
        <dbReference type="EMBL" id="SMX97377.1"/>
    </source>
</evidence>
<protein>
    <recommendedName>
        <fullName evidence="4 5">L-methionine gamma-lyase</fullName>
        <shortName evidence="4 5">MGL</shortName>
        <ecNumber evidence="2 3">4.4.1.11</ecNumber>
    </recommendedName>
    <alternativeName>
        <fullName evidence="4">Homocysteine desulfhydrase</fullName>
        <ecNumber evidence="2">4.4.1.2</ecNumber>
    </alternativeName>
    <alternativeName>
        <fullName evidence="4">MGL-BL929</fullName>
    </alternativeName>
</protein>
<feature type="chain" id="PRO_0000462005" description="L-methionine gamma-lyase">
    <location>
        <begin position="1"/>
        <end position="406"/>
    </location>
</feature>
<feature type="binding site" evidence="1">
    <location>
        <begin position="76"/>
        <end position="78"/>
    </location>
    <ligand>
        <name>pyridoxal 5'-phosphate</name>
        <dbReference type="ChEBI" id="CHEBI:597326"/>
        <note>ligand shared between dimeric partners</note>
    </ligand>
</feature>
<feature type="binding site" description="in other chain" evidence="1">
    <location>
        <begin position="106"/>
        <end position="107"/>
    </location>
    <ligand>
        <name>pyridoxal 5'-phosphate</name>
        <dbReference type="ChEBI" id="CHEBI:597326"/>
        <note>ligand shared between dimeric partners</note>
    </ligand>
</feature>
<feature type="binding site" evidence="1">
    <location>
        <position position="132"/>
    </location>
    <ligand>
        <name>L-homocysteine</name>
        <dbReference type="ChEBI" id="CHEBI:58199"/>
    </ligand>
</feature>
<feature type="binding site" description="in other chain" evidence="1">
    <location>
        <begin position="219"/>
        <end position="221"/>
    </location>
    <ligand>
        <name>pyridoxal 5'-phosphate</name>
        <dbReference type="ChEBI" id="CHEBI:597326"/>
        <note>ligand shared between dimeric partners</note>
    </ligand>
</feature>
<feature type="binding site" evidence="1">
    <location>
        <position position="380"/>
    </location>
    <ligand>
        <name>L-homocysteine</name>
        <dbReference type="ChEBI" id="CHEBI:58199"/>
    </ligand>
</feature>
<feature type="binding site" evidence="1">
    <location>
        <position position="380"/>
    </location>
    <ligand>
        <name>L-methionine</name>
        <dbReference type="ChEBI" id="CHEBI:57844"/>
    </ligand>
</feature>
<feature type="modified residue" description="N6-(pyridoxal phosphate)lysine" evidence="1">
    <location>
        <position position="222"/>
    </location>
</feature>
<keyword id="KW-0456">Lyase</keyword>
<keyword id="KW-0663">Pyridoxal phosphate</keyword>